<comment type="function">
    <text evidence="1">Required for the import and folding of small cysteine-containing proteins (small Tim) in the mitochondrial intermembrane space (IMS). Forms a redox cycle with ERV1 that involves a disulfide relay system. Precursor proteins to be imported into the IMS are translocated in their reduced form into the mitochondria. The oxidized form of MIA40 forms a transient intermolecular disulfide bridge with the reduced precursor protein, resulting in oxidation of the precursor protein that now contains an intramolecular disulfide bond and is able to undergo folding in the IMS (By similarity).</text>
</comment>
<comment type="cofactor">
    <cofactor evidence="1">
        <name>Cu(2+)</name>
        <dbReference type="ChEBI" id="CHEBI:29036"/>
    </cofactor>
    <cofactor evidence="1">
        <name>Zn(2+)</name>
        <dbReference type="ChEBI" id="CHEBI:29105"/>
    </cofactor>
    <text evidence="1">Cu(2+) or Zn(2+).</text>
</comment>
<comment type="subunit">
    <text evidence="1">Monomer.</text>
</comment>
<comment type="subcellular location">
    <subcellularLocation>
        <location evidence="1">Mitochondrion inner membrane</location>
        <topology evidence="1">Single-pass type II membrane protein</topology>
        <orientation evidence="1">Intermembrane side</orientation>
    </subcellularLocation>
</comment>
<comment type="domain">
    <text evidence="1">The CHCH domain contains a conserved twin Cys-X(9)-Cys motif which is required for import and stability of MIA40 in mitochondria.</text>
</comment>
<sequence length="187" mass="20379">MFRPASRALLRAPAVARGPASRRLISTAPAESKPRSWKNTAVRLGLAAGAIYYYNTSNVFAENPSFSLNNQLKKNSAEEPLPTLDSIKPRIREERESAAPKPNAEQAPAQELPFGEGAVKSPQELEEEAGQEAAFNPETGEINWDCPCLGGMAHGPCGEEFKAAFSCFVYSEEEPKGMDCIEKFKCV</sequence>
<keyword id="KW-1015">Disulfide bond</keyword>
<keyword id="KW-0472">Membrane</keyword>
<keyword id="KW-0496">Mitochondrion</keyword>
<keyword id="KW-0999">Mitochondrion inner membrane</keyword>
<keyword id="KW-0560">Oxidoreductase</keyword>
<keyword id="KW-0653">Protein transport</keyword>
<keyword id="KW-0676">Redox-active center</keyword>
<keyword id="KW-1185">Reference proteome</keyword>
<keyword id="KW-0735">Signal-anchor</keyword>
<keyword id="KW-0809">Transit peptide</keyword>
<keyword id="KW-0811">Translocation</keyword>
<keyword id="KW-0812">Transmembrane</keyword>
<keyword id="KW-1133">Transmembrane helix</keyword>
<keyword id="KW-0813">Transport</keyword>
<reference key="1">
    <citation type="journal article" date="2005" name="Nature">
        <title>Genome sequencing and analysis of Aspergillus oryzae.</title>
        <authorList>
            <person name="Machida M."/>
            <person name="Asai K."/>
            <person name="Sano M."/>
            <person name="Tanaka T."/>
            <person name="Kumagai T."/>
            <person name="Terai G."/>
            <person name="Kusumoto K."/>
            <person name="Arima T."/>
            <person name="Akita O."/>
            <person name="Kashiwagi Y."/>
            <person name="Abe K."/>
            <person name="Gomi K."/>
            <person name="Horiuchi H."/>
            <person name="Kitamoto K."/>
            <person name="Kobayashi T."/>
            <person name="Takeuchi M."/>
            <person name="Denning D.W."/>
            <person name="Galagan J.E."/>
            <person name="Nierman W.C."/>
            <person name="Yu J."/>
            <person name="Archer D.B."/>
            <person name="Bennett J.W."/>
            <person name="Bhatnagar D."/>
            <person name="Cleveland T.E."/>
            <person name="Fedorova N.D."/>
            <person name="Gotoh O."/>
            <person name="Horikawa H."/>
            <person name="Hosoyama A."/>
            <person name="Ichinomiya M."/>
            <person name="Igarashi R."/>
            <person name="Iwashita K."/>
            <person name="Juvvadi P.R."/>
            <person name="Kato M."/>
            <person name="Kato Y."/>
            <person name="Kin T."/>
            <person name="Kokubun A."/>
            <person name="Maeda H."/>
            <person name="Maeyama N."/>
            <person name="Maruyama J."/>
            <person name="Nagasaki H."/>
            <person name="Nakajima T."/>
            <person name="Oda K."/>
            <person name="Okada K."/>
            <person name="Paulsen I."/>
            <person name="Sakamoto K."/>
            <person name="Sawano T."/>
            <person name="Takahashi M."/>
            <person name="Takase K."/>
            <person name="Terabayashi Y."/>
            <person name="Wortman J.R."/>
            <person name="Yamada O."/>
            <person name="Yamagata Y."/>
            <person name="Anazawa H."/>
            <person name="Hata Y."/>
            <person name="Koide Y."/>
            <person name="Komori T."/>
            <person name="Koyama Y."/>
            <person name="Minetoki T."/>
            <person name="Suharnan S."/>
            <person name="Tanaka A."/>
            <person name="Isono K."/>
            <person name="Kuhara S."/>
            <person name="Ogasawara N."/>
            <person name="Kikuchi H."/>
        </authorList>
    </citation>
    <scope>NUCLEOTIDE SEQUENCE [LARGE SCALE GENOMIC DNA]</scope>
    <source>
        <strain>ATCC 42149 / RIB 40</strain>
    </source>
</reference>
<name>MIA40_ASPOR</name>
<dbReference type="EMBL" id="BA000049">
    <property type="protein sequence ID" value="BAE55473.1"/>
    <property type="molecule type" value="Genomic_DNA"/>
</dbReference>
<dbReference type="SMR" id="Q2USJ2"/>
<dbReference type="STRING" id="510516.Q2USJ2"/>
<dbReference type="EnsemblFungi" id="BAE55473">
    <property type="protein sequence ID" value="BAE55473"/>
    <property type="gene ID" value="AO090005000405"/>
</dbReference>
<dbReference type="HOGENOM" id="CLU_054990_2_0_1"/>
<dbReference type="OMA" id="PRSWKNT"/>
<dbReference type="Proteomes" id="UP000006564">
    <property type="component" value="Chromosome 1"/>
</dbReference>
<dbReference type="GO" id="GO:0005743">
    <property type="term" value="C:mitochondrial inner membrane"/>
    <property type="evidence" value="ECO:0007669"/>
    <property type="project" value="UniProtKB-SubCell"/>
</dbReference>
<dbReference type="GO" id="GO:0005758">
    <property type="term" value="C:mitochondrial intermembrane space"/>
    <property type="evidence" value="ECO:0007669"/>
    <property type="project" value="TreeGrafter"/>
</dbReference>
<dbReference type="GO" id="GO:0015035">
    <property type="term" value="F:protein-disulfide reductase activity"/>
    <property type="evidence" value="ECO:0007669"/>
    <property type="project" value="InterPro"/>
</dbReference>
<dbReference type="GO" id="GO:0045041">
    <property type="term" value="P:protein import into mitochondrial intermembrane space"/>
    <property type="evidence" value="ECO:0007669"/>
    <property type="project" value="InterPro"/>
</dbReference>
<dbReference type="Gene3D" id="1.10.287.2900">
    <property type="match status" value="1"/>
</dbReference>
<dbReference type="InterPro" id="IPR039289">
    <property type="entry name" value="CHCHD4"/>
</dbReference>
<dbReference type="PANTHER" id="PTHR21622">
    <property type="entry name" value="COILED-COIL-HELIX-COILED-COIL-HELIX DOMAIN CONTAINING 4"/>
    <property type="match status" value="1"/>
</dbReference>
<dbReference type="PANTHER" id="PTHR21622:SF0">
    <property type="entry name" value="COILED-COIL-HELIX-COILED-COIL-HELIX DOMAIN CONTAINING 4"/>
    <property type="match status" value="1"/>
</dbReference>
<dbReference type="PROSITE" id="PS51808">
    <property type="entry name" value="CHCH"/>
    <property type="match status" value="1"/>
</dbReference>
<proteinExistence type="inferred from homology"/>
<evidence type="ECO:0000250" key="1"/>
<evidence type="ECO:0000255" key="2"/>
<evidence type="ECO:0000255" key="3">
    <source>
        <dbReference type="PROSITE-ProRule" id="PRU01150"/>
    </source>
</evidence>
<evidence type="ECO:0000256" key="4">
    <source>
        <dbReference type="SAM" id="MobiDB-lite"/>
    </source>
</evidence>
<organism>
    <name type="scientific">Aspergillus oryzae (strain ATCC 42149 / RIB 40)</name>
    <name type="common">Yellow koji mold</name>
    <dbReference type="NCBI Taxonomy" id="510516"/>
    <lineage>
        <taxon>Eukaryota</taxon>
        <taxon>Fungi</taxon>
        <taxon>Dikarya</taxon>
        <taxon>Ascomycota</taxon>
        <taxon>Pezizomycotina</taxon>
        <taxon>Eurotiomycetes</taxon>
        <taxon>Eurotiomycetidae</taxon>
        <taxon>Eurotiales</taxon>
        <taxon>Aspergillaceae</taxon>
        <taxon>Aspergillus</taxon>
        <taxon>Aspergillus subgen. Circumdati</taxon>
    </lineage>
</organism>
<feature type="transit peptide" description="Mitochondrion" evidence="2">
    <location>
        <begin position="1"/>
        <end position="24"/>
    </location>
</feature>
<feature type="chain" id="PRO_0000235284" description="Mitochondrial intermembrane space import and assembly protein 40">
    <location>
        <begin position="25"/>
        <end position="187"/>
    </location>
</feature>
<feature type="topological domain" description="Mitochondrial matrix" evidence="2">
    <location>
        <begin position="25"/>
        <end position="43"/>
    </location>
</feature>
<feature type="transmembrane region" description="Helical; Signal-anchor for type II membrane protein" evidence="2">
    <location>
        <begin position="44"/>
        <end position="61"/>
    </location>
</feature>
<feature type="topological domain" description="Mitochondrial intermembrane" evidence="2">
    <location>
        <begin position="62"/>
        <end position="187"/>
    </location>
</feature>
<feature type="domain" description="CHCH" evidence="3">
    <location>
        <begin position="154"/>
        <end position="187"/>
    </location>
</feature>
<feature type="region of interest" description="Disordered" evidence="4">
    <location>
        <begin position="73"/>
        <end position="115"/>
    </location>
</feature>
<feature type="short sequence motif" description="Cx9C motif" evidence="3">
    <location>
        <begin position="157"/>
        <end position="167"/>
    </location>
</feature>
<feature type="compositionally biased region" description="Basic and acidic residues" evidence="4">
    <location>
        <begin position="87"/>
        <end position="98"/>
    </location>
</feature>
<feature type="disulfide bond" description="Redox-active" evidence="1">
    <location>
        <begin position="146"/>
        <end position="148"/>
    </location>
</feature>
<feature type="disulfide bond" evidence="3">
    <location>
        <begin position="167"/>
        <end position="180"/>
    </location>
</feature>
<accession>Q2USJ2</accession>
<gene>
    <name type="primary">mia40</name>
    <name type="synonym">tim40</name>
    <name type="ORF">AO090005000405</name>
</gene>
<protein>
    <recommendedName>
        <fullName>Mitochondrial intermembrane space import and assembly protein 40</fullName>
    </recommendedName>
    <alternativeName>
        <fullName>Mitochondrial import inner membrane translocase TIM40</fullName>
    </alternativeName>
</protein>